<evidence type="ECO:0000250" key="1"/>
<evidence type="ECO:0000250" key="2">
    <source>
        <dbReference type="UniProtKB" id="P08123"/>
    </source>
</evidence>
<evidence type="ECO:0000250" key="3">
    <source>
        <dbReference type="UniProtKB" id="Q03692"/>
    </source>
</evidence>
<evidence type="ECO:0000255" key="4"/>
<evidence type="ECO:0000255" key="5">
    <source>
        <dbReference type="PROSITE-ProRule" id="PRU00793"/>
    </source>
</evidence>
<evidence type="ECO:0000256" key="6">
    <source>
        <dbReference type="SAM" id="MobiDB-lite"/>
    </source>
</evidence>
<sequence length="1355" mass="127644">MLSFVDLRSVLLLAVTLYLVTCQEVRRGPRGDKGPPGEQGPPGIPGRDGEDGLPGLPGPPGVPGLGGNFAAQYDPSKSAEPGQQGIMGPRGPPGPPGSPGSQGFQGLPGENGEPGQTGPVGSRGPSGAPGKAGEDGHPGKSGRPGERGPVGPQGARGFPGTPGLPGFKGIRGHTGSDGQKGAPGAAGVKGENGANGDNGSPGQAGARGLPGERGRIGPAGSAGSRGSDGSSGPVGPAGPIGSAGAPGLPGAPGAKGELGPAGNNGPTGAAGGRGEPGPPGSLGPAGPPGNPGTNGVNGAKGTAGLPGVGGAPGLPGGRGIPGPAGPAGPSGARGLAGDPGIAGGKGDTGSKGEPGSVGQQGPAGPSGEEGKRGPNGEAGSSGPSGNAGIRGVPGTRGLPGPDGRAGGIGPAGSRGSSGPPGARGPNGDAGRPGEPGLLGARGLPGFSGSNGPQGKEGPAGPQGIEGRSGAAGPAGARGEPGAIGFPGPKGPNGEPGKNGDKGNQGPSGNRGAPGPDGNNGAQGPAGLGGATGEKGEQGPSGAPGFQGLPGPGGPPGEVGKPGERGAPGDFGPPGSAGTRGERGAPGESGGAGPHGPSGSRGPSGAPGPDGQKGEPGAAGLNGGLGPSGPAGIPGERGTAGTPGTKGEKGDAGNSGDYGNPGRDGARGPAGAAGAPGPAGGPGDRGESGPAGPSGVAGPRGAPGERGEAGPAGPTGFAGPPGAAGHTGAKGDRGAKGPKGEAGSPGPLGAHGSAGPAGPNGPAGSTGARGDAGPSGATGFPGPAGRAGAPGPPGNVGPSGPTGHPGKDGSRGPRGDSGPVGRPGEQGQHGPVGLAGDKGPSGEAGPAGPPGAAGPSGVLGARGILGLPGTRGERGLPGGPGSNGEPGPSGLAGSSGPRGPPGSVGSPGPVGHSGEAGRDGHPGNDGPPGRDGLPGAKGERGYPGNTGPSGLAGAPGPAGSAGPAGKSGNRGEGGPSGPAGITGPSGPRGPAGPQGVRGDKGEAGERGARGLDGRKGHNGLSGLPGPSGTPGETGPSGSVGPVGPRGPSGPSGPPGKEGRSGHPGAMGPVGPRGPAGFTGPAGPPGPPGPPGHAGPSGGGYDGGDGGEYYRADQPERKPKDYEVDATLKSLNQQIEVILTPEGSRKNPARTCRDLRLSHPEWTSGFYWIDPNQGCTSDAIRVFCDFSSGETCIHANPDEITQKNWYINTSNKDKKHLWFGEILNGGTQFEYHDEGLTAKDMATQLAFMRLLANQASQNITYHCKNSIAYMDEETGNLKKAVILQGSNDVELRAEGNTRFTYSVLEDGCTKHTGEWGKTVIEYRTNKPSRLPILDIAPLDIGGHDQEIGFEIGPVCFK</sequence>
<reference key="1">
    <citation type="journal article" date="1997" name="Gene">
        <title>Cloning and characterization of the full length cDNA encoding alpha2 type I collagen of bullfrog Rana catesbeiana.</title>
        <authorList>
            <person name="Asahina K."/>
            <person name="Oofusa K."/>
            <person name="Obara M."/>
            <person name="Yoshizato K."/>
        </authorList>
    </citation>
    <scope>NUCLEOTIDE SEQUENCE [MRNA]</scope>
    <source>
        <tissue>Tail</tissue>
    </source>
</reference>
<gene>
    <name type="primary">COL1A2</name>
</gene>
<name>CO1A2_AQUCT</name>
<keyword id="KW-0106">Calcium</keyword>
<keyword id="KW-0176">Collagen</keyword>
<keyword id="KW-1015">Disulfide bond</keyword>
<keyword id="KW-0272">Extracellular matrix</keyword>
<keyword id="KW-0325">Glycoprotein</keyword>
<keyword id="KW-0379">Hydroxylation</keyword>
<keyword id="KW-0479">Metal-binding</keyword>
<keyword id="KW-0873">Pyrrolidone carboxylic acid</keyword>
<keyword id="KW-0677">Repeat</keyword>
<keyword id="KW-0964">Secreted</keyword>
<keyword id="KW-0732">Signal</keyword>
<comment type="function">
    <text>Type I collagen is a member of group I collagen (fibrillar forming collagen).</text>
</comment>
<comment type="subunit">
    <text>Trimers of one alpha 2(I) and two alpha 1(I) chains.</text>
</comment>
<comment type="subcellular location">
    <subcellularLocation>
        <location evidence="5">Secreted</location>
        <location evidence="5">Extracellular space</location>
        <location evidence="5">Extracellular matrix</location>
    </subcellularLocation>
</comment>
<comment type="tissue specificity">
    <text>Forms the fibrils of tendon, ligaments and bones. In bones the fibrils are mineralized with calcium hydroxyapatite.</text>
</comment>
<comment type="domain">
    <text evidence="1">The C-terminal propeptide, also known as COLFI domain, have crucial roles in tissue growth and repair by controlling both the intracellular assembly of procollagen molecules and the extracellular assembly of collagen fibrils. It binds a calcium ion which is essential for its function.</text>
</comment>
<comment type="PTM">
    <text>Prolines at the third position of the tripeptide repeating unit (G-X-Y) are hydroxylated in some or all of the chains.</text>
</comment>
<comment type="similarity">
    <text evidence="5">Belongs to the fibrillar collagen family.</text>
</comment>
<feature type="signal peptide" evidence="2">
    <location>
        <begin position="1"/>
        <end position="22"/>
    </location>
</feature>
<feature type="propeptide" id="PRO_0000005818" description="N-terminal propeptide" evidence="2">
    <location>
        <begin position="23"/>
        <end position="71"/>
    </location>
</feature>
<feature type="chain" id="PRO_0000005819" description="Collagen alpha-2(I) chain">
    <location>
        <begin position="72"/>
        <end position="1110"/>
    </location>
</feature>
<feature type="propeptide" id="PRO_0000005820" description="C-terminal propeptide" evidence="2">
    <location>
        <begin position="1111"/>
        <end position="1355"/>
    </location>
</feature>
<feature type="domain" description="Fibrillar collagen NC1" evidence="5">
    <location>
        <begin position="1120"/>
        <end position="1355"/>
    </location>
</feature>
<feature type="region of interest" description="Disordered" evidence="6">
    <location>
        <begin position="26"/>
        <end position="1111"/>
    </location>
</feature>
<feature type="compositionally biased region" description="Basic and acidic residues" evidence="6">
    <location>
        <begin position="26"/>
        <end position="35"/>
    </location>
</feature>
<feature type="compositionally biased region" description="Low complexity" evidence="6">
    <location>
        <begin position="99"/>
        <end position="108"/>
    </location>
</feature>
<feature type="compositionally biased region" description="Basic and acidic residues" evidence="6">
    <location>
        <begin position="132"/>
        <end position="146"/>
    </location>
</feature>
<feature type="compositionally biased region" description="Low complexity" evidence="6">
    <location>
        <begin position="218"/>
        <end position="267"/>
    </location>
</feature>
<feature type="compositionally biased region" description="Pro residues" evidence="6">
    <location>
        <begin position="276"/>
        <end position="290"/>
    </location>
</feature>
<feature type="compositionally biased region" description="Low complexity" evidence="6">
    <location>
        <begin position="291"/>
        <end position="303"/>
    </location>
</feature>
<feature type="compositionally biased region" description="Gly residues" evidence="6">
    <location>
        <begin position="304"/>
        <end position="322"/>
    </location>
</feature>
<feature type="compositionally biased region" description="Low complexity" evidence="6">
    <location>
        <begin position="327"/>
        <end position="336"/>
    </location>
</feature>
<feature type="compositionally biased region" description="Gly residues" evidence="6">
    <location>
        <begin position="340"/>
        <end position="349"/>
    </location>
</feature>
<feature type="compositionally biased region" description="Gly residues" evidence="6">
    <location>
        <begin position="403"/>
        <end position="412"/>
    </location>
</feature>
<feature type="compositionally biased region" description="Low complexity" evidence="6">
    <location>
        <begin position="413"/>
        <end position="426"/>
    </location>
</feature>
<feature type="compositionally biased region" description="Low complexity" evidence="6">
    <location>
        <begin position="465"/>
        <end position="495"/>
    </location>
</feature>
<feature type="compositionally biased region" description="Gly residues" evidence="6">
    <location>
        <begin position="523"/>
        <end position="532"/>
    </location>
</feature>
<feature type="compositionally biased region" description="Gly residues" evidence="6">
    <location>
        <begin position="586"/>
        <end position="595"/>
    </location>
</feature>
<feature type="compositionally biased region" description="Low complexity" evidence="6">
    <location>
        <begin position="596"/>
        <end position="618"/>
    </location>
</feature>
<feature type="compositionally biased region" description="Gly residues" evidence="6">
    <location>
        <begin position="619"/>
        <end position="628"/>
    </location>
</feature>
<feature type="compositionally biased region" description="Low complexity" evidence="6">
    <location>
        <begin position="659"/>
        <end position="675"/>
    </location>
</feature>
<feature type="compositionally biased region" description="Low complexity" evidence="6">
    <location>
        <begin position="687"/>
        <end position="701"/>
    </location>
</feature>
<feature type="compositionally biased region" description="Low complexity" evidence="6">
    <location>
        <begin position="708"/>
        <end position="726"/>
    </location>
</feature>
<feature type="compositionally biased region" description="Basic and acidic residues" evidence="6">
    <location>
        <begin position="728"/>
        <end position="738"/>
    </location>
</feature>
<feature type="compositionally biased region" description="Low complexity" evidence="6">
    <location>
        <begin position="741"/>
        <end position="767"/>
    </location>
</feature>
<feature type="compositionally biased region" description="Low complexity" evidence="6">
    <location>
        <begin position="776"/>
        <end position="788"/>
    </location>
</feature>
<feature type="compositionally biased region" description="Basic and acidic residues" evidence="6">
    <location>
        <begin position="804"/>
        <end position="813"/>
    </location>
</feature>
<feature type="compositionally biased region" description="Low complexity" evidence="6">
    <location>
        <begin position="852"/>
        <end position="869"/>
    </location>
</feature>
<feature type="compositionally biased region" description="Gly residues" evidence="6">
    <location>
        <begin position="874"/>
        <end position="883"/>
    </location>
</feature>
<feature type="compositionally biased region" description="Low complexity" evidence="6">
    <location>
        <begin position="884"/>
        <end position="912"/>
    </location>
</feature>
<feature type="compositionally biased region" description="Low complexity" evidence="6">
    <location>
        <begin position="947"/>
        <end position="966"/>
    </location>
</feature>
<feature type="compositionally biased region" description="Gly residues" evidence="6">
    <location>
        <begin position="967"/>
        <end position="976"/>
    </location>
</feature>
<feature type="compositionally biased region" description="Basic and acidic residues" evidence="6">
    <location>
        <begin position="996"/>
        <end position="1014"/>
    </location>
</feature>
<feature type="compositionally biased region" description="Low complexity" evidence="6">
    <location>
        <begin position="1019"/>
        <end position="1041"/>
    </location>
</feature>
<feature type="compositionally biased region" description="Pro residues" evidence="6">
    <location>
        <begin position="1080"/>
        <end position="1091"/>
    </location>
</feature>
<feature type="compositionally biased region" description="Gly residues" evidence="6">
    <location>
        <begin position="1093"/>
        <end position="1105"/>
    </location>
</feature>
<feature type="binding site" evidence="3">
    <location>
        <position position="1168"/>
    </location>
    <ligand>
        <name>Ca(2+)</name>
        <dbReference type="ChEBI" id="CHEBI:29108"/>
    </ligand>
</feature>
<feature type="binding site" evidence="3">
    <location>
        <position position="1170"/>
    </location>
    <ligand>
        <name>Ca(2+)</name>
        <dbReference type="ChEBI" id="CHEBI:29108"/>
    </ligand>
</feature>
<feature type="binding site" evidence="3">
    <location>
        <position position="1171"/>
    </location>
    <ligand>
        <name>Ca(2+)</name>
        <dbReference type="ChEBI" id="CHEBI:29108"/>
    </ligand>
</feature>
<feature type="binding site" evidence="3">
    <location>
        <position position="1173"/>
    </location>
    <ligand>
        <name>Ca(2+)</name>
        <dbReference type="ChEBI" id="CHEBI:29108"/>
    </ligand>
</feature>
<feature type="binding site" evidence="3">
    <location>
        <position position="1176"/>
    </location>
    <ligand>
        <name>Ca(2+)</name>
        <dbReference type="ChEBI" id="CHEBI:29108"/>
    </ligand>
</feature>
<feature type="modified residue" description="Pyrrolidone carboxylic acid" evidence="2">
    <location>
        <position position="23"/>
    </location>
</feature>
<feature type="modified residue" description="Pyrrolidone carboxylic acid" evidence="2">
    <location>
        <position position="72"/>
    </location>
</feature>
<feature type="modified residue" description="Allysine" evidence="2">
    <location>
        <position position="77"/>
    </location>
</feature>
<feature type="modified residue" description="5-hydroxylysine; alternate" evidence="2">
    <location>
        <position position="168"/>
    </location>
</feature>
<feature type="glycosylation site" description="O-linked (Gal...) hydroxylysine; alternate" evidence="2">
    <location>
        <position position="168"/>
    </location>
</feature>
<feature type="glycosylation site" description="N-linked (GlcNAc...) asparagine" evidence="4">
    <location>
        <position position="1206"/>
    </location>
</feature>
<feature type="glycosylation site" description="N-linked (GlcNAc...) asparagine" evidence="4">
    <location>
        <position position="1256"/>
    </location>
</feature>
<feature type="disulfide bond" evidence="5">
    <location>
        <begin position="1150"/>
        <end position="1182"/>
    </location>
</feature>
<feature type="disulfide bond" evidence="5">
    <location>
        <begin position="1190"/>
        <end position="1353"/>
    </location>
</feature>
<feature type="disulfide bond" evidence="5">
    <location>
        <begin position="1261"/>
        <end position="1306"/>
    </location>
</feature>
<organism>
    <name type="scientific">Aquarana catesbeiana</name>
    <name type="common">American bullfrog</name>
    <name type="synonym">Rana catesbeiana</name>
    <dbReference type="NCBI Taxonomy" id="8400"/>
    <lineage>
        <taxon>Eukaryota</taxon>
        <taxon>Metazoa</taxon>
        <taxon>Chordata</taxon>
        <taxon>Craniata</taxon>
        <taxon>Vertebrata</taxon>
        <taxon>Euteleostomi</taxon>
        <taxon>Amphibia</taxon>
        <taxon>Batrachia</taxon>
        <taxon>Anura</taxon>
        <taxon>Neobatrachia</taxon>
        <taxon>Ranoidea</taxon>
        <taxon>Ranidae</taxon>
        <taxon>Aquarana</taxon>
    </lineage>
</organism>
<accession>O42350</accession>
<proteinExistence type="evidence at transcript level"/>
<protein>
    <recommendedName>
        <fullName>Collagen alpha-2(I) chain</fullName>
    </recommendedName>
    <alternativeName>
        <fullName>Alpha-2 type I collagen</fullName>
    </alternativeName>
</protein>
<dbReference type="EMBL" id="D88764">
    <property type="protein sequence ID" value="BAA22380.1"/>
    <property type="molecule type" value="mRNA"/>
</dbReference>
<dbReference type="GlyCosmos" id="O42350">
    <property type="glycosylation" value="3 sites, No reported glycans"/>
</dbReference>
<dbReference type="GO" id="GO:0005584">
    <property type="term" value="C:collagen type I trimer"/>
    <property type="evidence" value="ECO:0007669"/>
    <property type="project" value="TreeGrafter"/>
</dbReference>
<dbReference type="GO" id="GO:0005615">
    <property type="term" value="C:extracellular space"/>
    <property type="evidence" value="ECO:0007669"/>
    <property type="project" value="TreeGrafter"/>
</dbReference>
<dbReference type="GO" id="GO:0030020">
    <property type="term" value="F:extracellular matrix structural constituent conferring tensile strength"/>
    <property type="evidence" value="ECO:0007669"/>
    <property type="project" value="TreeGrafter"/>
</dbReference>
<dbReference type="GO" id="GO:0046872">
    <property type="term" value="F:metal ion binding"/>
    <property type="evidence" value="ECO:0007669"/>
    <property type="project" value="UniProtKB-KW"/>
</dbReference>
<dbReference type="GO" id="GO:0030198">
    <property type="term" value="P:extracellular matrix organization"/>
    <property type="evidence" value="ECO:0007669"/>
    <property type="project" value="TreeGrafter"/>
</dbReference>
<dbReference type="FunFam" id="2.60.120.1000:FF:000001">
    <property type="entry name" value="Collagen alpha-1 type I chain"/>
    <property type="match status" value="1"/>
</dbReference>
<dbReference type="Gene3D" id="2.60.120.1000">
    <property type="match status" value="1"/>
</dbReference>
<dbReference type="InterPro" id="IPR008160">
    <property type="entry name" value="Collagen"/>
</dbReference>
<dbReference type="InterPro" id="IPR050149">
    <property type="entry name" value="Collagen_superfamily"/>
</dbReference>
<dbReference type="InterPro" id="IPR000885">
    <property type="entry name" value="Fib_collagen_C"/>
</dbReference>
<dbReference type="PANTHER" id="PTHR24023">
    <property type="entry name" value="COLLAGEN ALPHA"/>
    <property type="match status" value="1"/>
</dbReference>
<dbReference type="PANTHER" id="PTHR24023:SF568">
    <property type="entry name" value="COLLAGEN ALPHA-2(I) CHAIN"/>
    <property type="match status" value="1"/>
</dbReference>
<dbReference type="Pfam" id="PF01410">
    <property type="entry name" value="COLFI"/>
    <property type="match status" value="1"/>
</dbReference>
<dbReference type="Pfam" id="PF01391">
    <property type="entry name" value="Collagen"/>
    <property type="match status" value="5"/>
</dbReference>
<dbReference type="SMART" id="SM00038">
    <property type="entry name" value="COLFI"/>
    <property type="match status" value="1"/>
</dbReference>
<dbReference type="PROSITE" id="PS51461">
    <property type="entry name" value="NC1_FIB"/>
    <property type="match status" value="1"/>
</dbReference>